<name>ZNTB_ECOL6</name>
<gene>
    <name evidence="1" type="primary">zntB</name>
    <name type="ordered locus">c1816</name>
</gene>
<sequence length="327" mass="36612">MEAIKGSDVNVPDAVFAWMLDGRGGVKPLENTDVIDEAHPCWLHLNYVHHDSAQWLATTPLLPNNVRDALAGESTRPRVSRLGEGTLITLRCINGSTDERPDQLVAMRVYMDGRLIVSTRQRKVLALDDVVSDLEEGTGPTDCGGWLVDVCDALTDHSSEFIEQLHDKIIDLEDNLLDQQIPPRGFLALLRKQLIVMRRYMAPQRDVYARLASERLPWMSDDQRRRMQDIADRLGRGLDEIDACIARTGVMADEIAQVMQENLARRTYTMSLMAMVFLPSTFLTGLFGVNLGGIPGGGWQFGFSIFCILLVVLIGGVALWLHRSKWL</sequence>
<feature type="chain" id="PRO_0000201316" description="Zinc transport protein ZntB">
    <location>
        <begin position="1"/>
        <end position="327"/>
    </location>
</feature>
<feature type="topological domain" description="Cytoplasmic" evidence="1">
    <location>
        <begin position="1"/>
        <end position="273"/>
    </location>
</feature>
<feature type="transmembrane region" description="Helical" evidence="1">
    <location>
        <begin position="274"/>
        <end position="294"/>
    </location>
</feature>
<feature type="topological domain" description="Periplasmic" evidence="1">
    <location>
        <begin position="295"/>
        <end position="300"/>
    </location>
</feature>
<feature type="transmembrane region" description="Helical" evidence="1">
    <location>
        <begin position="301"/>
        <end position="321"/>
    </location>
</feature>
<feature type="topological domain" description="Cytoplasmic" evidence="1">
    <location>
        <begin position="322"/>
        <end position="327"/>
    </location>
</feature>
<accession>P64424</accession>
<accession>P76054</accession>
<keyword id="KW-0997">Cell inner membrane</keyword>
<keyword id="KW-1003">Cell membrane</keyword>
<keyword id="KW-0406">Ion transport</keyword>
<keyword id="KW-0472">Membrane</keyword>
<keyword id="KW-1185">Reference proteome</keyword>
<keyword id="KW-0812">Transmembrane</keyword>
<keyword id="KW-1133">Transmembrane helix</keyword>
<keyword id="KW-0813">Transport</keyword>
<keyword id="KW-0862">Zinc</keyword>
<comment type="function">
    <text evidence="1">Zinc transporter. Acts as a Zn(2+):proton symporter, which likely mediates zinc ion uptake.</text>
</comment>
<comment type="catalytic activity">
    <reaction evidence="1">
        <text>Zn(2+)(out) + H(+)(out) = Zn(2+)(in) + H(+)(in)</text>
        <dbReference type="Rhea" id="RHEA:71195"/>
        <dbReference type="ChEBI" id="CHEBI:15378"/>
        <dbReference type="ChEBI" id="CHEBI:29105"/>
    </reaction>
    <physiologicalReaction direction="left-to-right" evidence="1">
        <dbReference type="Rhea" id="RHEA:71196"/>
    </physiologicalReaction>
</comment>
<comment type="subcellular location">
    <subcellularLocation>
        <location evidence="1">Cell inner membrane</location>
        <topology evidence="1">Multi-pass membrane protein</topology>
    </subcellularLocation>
</comment>
<comment type="similarity">
    <text evidence="1">Belongs to the CorA metal ion transporter (MIT) (TC 1.A.35) family.</text>
</comment>
<evidence type="ECO:0000255" key="1">
    <source>
        <dbReference type="HAMAP-Rule" id="MF_01565"/>
    </source>
</evidence>
<reference key="1">
    <citation type="journal article" date="2002" name="Proc. Natl. Acad. Sci. U.S.A.">
        <title>Extensive mosaic structure revealed by the complete genome sequence of uropathogenic Escherichia coli.</title>
        <authorList>
            <person name="Welch R.A."/>
            <person name="Burland V."/>
            <person name="Plunkett G. III"/>
            <person name="Redford P."/>
            <person name="Roesch P."/>
            <person name="Rasko D."/>
            <person name="Buckles E.L."/>
            <person name="Liou S.-R."/>
            <person name="Boutin A."/>
            <person name="Hackett J."/>
            <person name="Stroud D."/>
            <person name="Mayhew G.F."/>
            <person name="Rose D.J."/>
            <person name="Zhou S."/>
            <person name="Schwartz D.C."/>
            <person name="Perna N.T."/>
            <person name="Mobley H.L.T."/>
            <person name="Donnenberg M.S."/>
            <person name="Blattner F.R."/>
        </authorList>
    </citation>
    <scope>NUCLEOTIDE SEQUENCE [LARGE SCALE GENOMIC DNA]</scope>
    <source>
        <strain>CFT073 / ATCC 700928 / UPEC</strain>
    </source>
</reference>
<dbReference type="EMBL" id="AE014075">
    <property type="protein sequence ID" value="AAN80280.1"/>
    <property type="molecule type" value="Genomic_DNA"/>
</dbReference>
<dbReference type="RefSeq" id="WP_000387388.1">
    <property type="nucleotide sequence ID" value="NZ_CP051263.1"/>
</dbReference>
<dbReference type="SMR" id="P64424"/>
<dbReference type="STRING" id="199310.c1816"/>
<dbReference type="GeneID" id="93775479"/>
<dbReference type="KEGG" id="ecc:c1816"/>
<dbReference type="eggNOG" id="COG0598">
    <property type="taxonomic scope" value="Bacteria"/>
</dbReference>
<dbReference type="HOGENOM" id="CLU_007127_2_0_6"/>
<dbReference type="BioCyc" id="ECOL199310:C1816-MONOMER"/>
<dbReference type="Proteomes" id="UP000001410">
    <property type="component" value="Chromosome"/>
</dbReference>
<dbReference type="GO" id="GO:0005886">
    <property type="term" value="C:plasma membrane"/>
    <property type="evidence" value="ECO:0007669"/>
    <property type="project" value="UniProtKB-SubCell"/>
</dbReference>
<dbReference type="GO" id="GO:0050897">
    <property type="term" value="F:cobalt ion binding"/>
    <property type="evidence" value="ECO:0007669"/>
    <property type="project" value="TreeGrafter"/>
</dbReference>
<dbReference type="GO" id="GO:0015087">
    <property type="term" value="F:cobalt ion transmembrane transporter activity"/>
    <property type="evidence" value="ECO:0007669"/>
    <property type="project" value="TreeGrafter"/>
</dbReference>
<dbReference type="GO" id="GO:0000287">
    <property type="term" value="F:magnesium ion binding"/>
    <property type="evidence" value="ECO:0007669"/>
    <property type="project" value="TreeGrafter"/>
</dbReference>
<dbReference type="GO" id="GO:0015095">
    <property type="term" value="F:magnesium ion transmembrane transporter activity"/>
    <property type="evidence" value="ECO:0007669"/>
    <property type="project" value="TreeGrafter"/>
</dbReference>
<dbReference type="GO" id="GO:0005385">
    <property type="term" value="F:zinc ion transmembrane transporter activity"/>
    <property type="evidence" value="ECO:0007669"/>
    <property type="project" value="UniProtKB-UniRule"/>
</dbReference>
<dbReference type="CDD" id="cd12833">
    <property type="entry name" value="ZntB-like_1"/>
    <property type="match status" value="1"/>
</dbReference>
<dbReference type="FunFam" id="1.20.58.340:FF:000002">
    <property type="entry name" value="Zinc transport protein ZntB"/>
    <property type="match status" value="1"/>
</dbReference>
<dbReference type="FunFam" id="1.20.58.340:FF:000003">
    <property type="entry name" value="Zinc transport protein ZntB"/>
    <property type="match status" value="1"/>
</dbReference>
<dbReference type="FunFam" id="3.30.460.20:FF:000001">
    <property type="entry name" value="Zinc transport protein ZntB"/>
    <property type="match status" value="1"/>
</dbReference>
<dbReference type="Gene3D" id="3.30.460.20">
    <property type="entry name" value="CorA soluble domain-like"/>
    <property type="match status" value="1"/>
</dbReference>
<dbReference type="Gene3D" id="1.20.58.340">
    <property type="entry name" value="Magnesium transport protein CorA, transmembrane region"/>
    <property type="match status" value="2"/>
</dbReference>
<dbReference type="HAMAP" id="MF_01565">
    <property type="entry name" value="ZntB"/>
    <property type="match status" value="1"/>
</dbReference>
<dbReference type="InterPro" id="IPR045861">
    <property type="entry name" value="CorA_cytoplasmic_dom"/>
</dbReference>
<dbReference type="InterPro" id="IPR045863">
    <property type="entry name" value="CorA_TM1_TM2"/>
</dbReference>
<dbReference type="InterPro" id="IPR002523">
    <property type="entry name" value="MgTranspt_CorA/ZnTranspt_ZntB"/>
</dbReference>
<dbReference type="InterPro" id="IPR023714">
    <property type="entry name" value="Zn_transp_ZntB"/>
</dbReference>
<dbReference type="NCBIfam" id="NF007092">
    <property type="entry name" value="PRK09546.1"/>
    <property type="match status" value="1"/>
</dbReference>
<dbReference type="PANTHER" id="PTHR46494">
    <property type="entry name" value="CORA FAMILY METAL ION TRANSPORTER (EUROFUNG)"/>
    <property type="match status" value="1"/>
</dbReference>
<dbReference type="PANTHER" id="PTHR46494:SF3">
    <property type="entry name" value="ZINC TRANSPORT PROTEIN ZNTB"/>
    <property type="match status" value="1"/>
</dbReference>
<dbReference type="Pfam" id="PF01544">
    <property type="entry name" value="CorA"/>
    <property type="match status" value="1"/>
</dbReference>
<dbReference type="SUPFAM" id="SSF143865">
    <property type="entry name" value="CorA soluble domain-like"/>
    <property type="match status" value="1"/>
</dbReference>
<dbReference type="SUPFAM" id="SSF144083">
    <property type="entry name" value="Magnesium transport protein CorA, transmembrane region"/>
    <property type="match status" value="1"/>
</dbReference>
<proteinExistence type="inferred from homology"/>
<organism>
    <name type="scientific">Escherichia coli O6:H1 (strain CFT073 / ATCC 700928 / UPEC)</name>
    <dbReference type="NCBI Taxonomy" id="199310"/>
    <lineage>
        <taxon>Bacteria</taxon>
        <taxon>Pseudomonadati</taxon>
        <taxon>Pseudomonadota</taxon>
        <taxon>Gammaproteobacteria</taxon>
        <taxon>Enterobacterales</taxon>
        <taxon>Enterobacteriaceae</taxon>
        <taxon>Escherichia</taxon>
    </lineage>
</organism>
<protein>
    <recommendedName>
        <fullName evidence="1">Zinc transport protein ZntB</fullName>
    </recommendedName>
</protein>